<keyword id="KW-0002">3D-structure</keyword>
<keyword id="KW-0067">ATP-binding</keyword>
<keyword id="KW-0190">Covalent protein-DNA linkage</keyword>
<keyword id="KW-0235">DNA replication</keyword>
<keyword id="KW-0238">DNA-binding</keyword>
<keyword id="KW-0255">Endonuclease</keyword>
<keyword id="KW-1078">G1/S host cell cycle checkpoint dysregulation by virus</keyword>
<keyword id="KW-1079">Host G2/M cell cycle arrest by virus</keyword>
<keyword id="KW-1048">Host nucleus</keyword>
<keyword id="KW-0945">Host-virus interaction</keyword>
<keyword id="KW-0378">Hydrolase</keyword>
<keyword id="KW-0479">Metal-binding</keyword>
<keyword id="KW-1121">Modulation of host cell cycle by virus</keyword>
<keyword id="KW-0540">Nuclease</keyword>
<keyword id="KW-0547">Nucleotide-binding</keyword>
<keyword id="KW-1185">Reference proteome</keyword>
<proteinExistence type="evidence at protein level"/>
<accession>Q89268</accession>
<accession>O56651</accession>
<reference key="1">
    <citation type="journal article" date="1983" name="J. Virol.">
        <title>Nucleotide sequence and organization of the adeno-associated virus 2 genome.</title>
        <authorList>
            <person name="Srivastava A."/>
            <person name="Lusby E.W."/>
            <person name="Berns K.I."/>
        </authorList>
    </citation>
    <scope>NUCLEOTIDE SEQUENCE [GENOMIC DNA]</scope>
</reference>
<reference key="2">
    <citation type="journal article" date="1994" name="J. Gen. Virol.">
        <title>Mutations in the carboxy terminus of adeno-associated virus 2 capsid proteins affect viral infectivity: lack of an RGD integrin-binding motif.</title>
        <authorList>
            <person name="Ruffing M."/>
            <person name="Heid H."/>
            <person name="Kleinschmidt J.A."/>
        </authorList>
    </citation>
    <scope>NUCLEOTIDE SEQUENCE [GENOMIC DNA]</scope>
</reference>
<reference key="3">
    <citation type="submission" date="1998-01" db="EMBL/GenBank/DDBJ databases">
        <authorList>
            <person name="Berns K.I."/>
            <person name="Bohenzky R.A."/>
            <person name="Cassinotti P."/>
            <person name="Colvin D."/>
            <person name="Donahue B.A."/>
            <person name="Dull T."/>
            <person name="Horer M."/>
            <person name="Kleinschmidt J.A."/>
            <person name="Ruffing M."/>
            <person name="Snyder R.O."/>
            <person name="Tratschin J.-D."/>
            <person name="Weitz M."/>
        </authorList>
    </citation>
    <scope>NUCLEOTIDE SEQUENCE [GENOMIC DNA]</scope>
</reference>
<reference key="4">
    <citation type="journal article" date="1992" name="J. Virol.">
        <title>Colocalization of adeno-associated virus Rep and capsid proteins in the nuclei of infected cells.</title>
        <authorList>
            <person name="Hunter L.A."/>
            <person name="Samulski R.J."/>
        </authorList>
    </citation>
    <scope>SUBCELLULAR LOCATION</scope>
</reference>
<reference key="5">
    <citation type="journal article" date="1997" name="J. Virol.">
        <title>The Rep78 gene product of adeno-associated virus (AAV) self-associates to form a hexameric complex in the presence of AAV ori sequences.</title>
        <authorList>
            <person name="Smith R.H."/>
            <person name="Spano A.J."/>
            <person name="Kotin R.M."/>
        </authorList>
    </citation>
    <scope>SUBUNIT</scope>
</reference>
<reference key="6">
    <citation type="journal article" date="1998" name="Mol. Cell. Biol.">
        <title>Inhibition of PrKX, a novel protein kinase, and the cyclic AMP-dependent protein kinase PKA by the regulatory proteins of adeno-associated virus type 2.</title>
        <authorList>
            <person name="Chiorini J.A."/>
            <person name="Zimmermann B."/>
            <person name="Yang L."/>
            <person name="Smith R.H."/>
            <person name="Ahearn A."/>
            <person name="Herberg F."/>
            <person name="Kotin R.M."/>
        </authorList>
    </citation>
    <scope>INTERACTION WITH HOST PRKX</scope>
</reference>
<reference key="7">
    <citation type="journal article" date="1998" name="Virology">
        <title>The adeno-associated virus Rep78 major regulatory protein binds the cellular TATA-binding protein in vitro and in vivo.</title>
        <authorList>
            <person name="Hermonat P.L."/>
            <person name="Santin A.D."/>
            <person name="Batchu R.B."/>
            <person name="Zhan D."/>
        </authorList>
    </citation>
    <scope>INTERACTION WITH HOST TBP</scope>
</reference>
<reference key="8">
    <citation type="journal article" date="1999" name="J. Virol.">
        <title>The adeno-associated virus type 2 regulatory proteins rep78 and rep68 interact with the transcriptional coactivator PC4.</title>
        <authorList>
            <person name="Weger S."/>
            <person name="Wendland M."/>
            <person name="Kleinschmidt J.A."/>
            <person name="Heilbronn R."/>
        </authorList>
    </citation>
    <scope>INTERACTION WITH HOST SUB1/PC4</scope>
</reference>
<reference key="9">
    <citation type="journal article" date="2000" name="EMBO J.">
        <title>Inhibition of S-phase progression by adeno-associated virus Rep78 protein is mediated by hypophosphorylated pRb.</title>
        <authorList>
            <person name="Saudan P."/>
            <person name="Vlach J."/>
            <person name="Beard P."/>
        </authorList>
    </citation>
    <scope>FUNCTION IN HOST CELL CYCLE ARREST</scope>
</reference>
<reference key="10">
    <citation type="journal article" date="2002" name="J. Gen. Virol.">
        <title>Topors, a p53 and topoisomerase I binding protein, interacts with the adeno-associated virus (AAV-2) Rep78/68 proteins and enhances AAV-2 gene expression.</title>
        <authorList>
            <person name="Weger S."/>
            <person name="Hammer E."/>
            <person name="Heilbronn R."/>
        </authorList>
    </citation>
    <scope>INTERACTION WITH HOST TOPORS</scope>
</reference>
<organism>
    <name type="scientific">Adeno-associated virus 2 (isolate Srivastava/1982)</name>
    <name type="common">AAV-2</name>
    <dbReference type="NCBI Taxonomy" id="648242"/>
    <lineage>
        <taxon>Viruses</taxon>
        <taxon>Monodnaviria</taxon>
        <taxon>Shotokuvirae</taxon>
        <taxon>Cossaviricota</taxon>
        <taxon>Quintoviricetes</taxon>
        <taxon>Piccovirales</taxon>
        <taxon>Parvoviridae</taxon>
        <taxon>Parvovirinae</taxon>
        <taxon>Dependoparvovirus</taxon>
        <taxon>Dependoparvovirus primate1</taxon>
    </lineage>
</organism>
<feature type="chain" id="PRO_0000428953" description="Protein Rep78">
    <location>
        <begin position="1"/>
        <end position="621"/>
    </location>
</feature>
<feature type="domain" description="PV NS1-Nuc" evidence="2">
    <location>
        <begin position="1"/>
        <end position="199"/>
    </location>
</feature>
<feature type="domain" description="SF3 helicase" evidence="1">
    <location>
        <begin position="308"/>
        <end position="463"/>
    </location>
</feature>
<feature type="region of interest" description="Disordered" evidence="3">
    <location>
        <begin position="196"/>
        <end position="216"/>
    </location>
</feature>
<feature type="region of interest" description="Disordered" evidence="3">
    <location>
        <begin position="489"/>
        <end position="520"/>
    </location>
</feature>
<feature type="short sequence motif" description="RCR-2" evidence="2">
    <location>
        <begin position="90"/>
        <end position="92"/>
    </location>
</feature>
<feature type="short sequence motif" description="RCR-3" evidence="2">
    <location>
        <begin position="156"/>
        <end position="160"/>
    </location>
</feature>
<feature type="compositionally biased region" description="Polar residues" evidence="3">
    <location>
        <begin position="196"/>
        <end position="211"/>
    </location>
</feature>
<feature type="active site" description="For nuclease activity" evidence="2">
    <location>
        <position position="156"/>
    </location>
</feature>
<feature type="binding site" evidence="2">
    <location>
        <position position="83"/>
    </location>
    <ligand>
        <name>a divalent metal cation</name>
        <dbReference type="ChEBI" id="CHEBI:60240"/>
    </ligand>
</feature>
<feature type="binding site" evidence="2">
    <location>
        <position position="90"/>
    </location>
    <ligand>
        <name>a divalent metal cation</name>
        <dbReference type="ChEBI" id="CHEBI:60240"/>
    </ligand>
</feature>
<feature type="binding site" evidence="2">
    <location>
        <position position="92"/>
    </location>
    <ligand>
        <name>a divalent metal cation</name>
        <dbReference type="ChEBI" id="CHEBI:60240"/>
    </ligand>
</feature>
<feature type="binding site" evidence="1">
    <location>
        <begin position="334"/>
        <end position="341"/>
    </location>
    <ligand>
        <name>ATP</name>
        <dbReference type="ChEBI" id="CHEBI:30616"/>
    </ligand>
</feature>
<feature type="strand" evidence="11">
    <location>
        <begin position="4"/>
        <end position="11"/>
    </location>
</feature>
<feature type="turn" evidence="11">
    <location>
        <begin position="29"/>
        <end position="32"/>
    </location>
</feature>
<feature type="helix" evidence="11">
    <location>
        <begin position="45"/>
        <end position="47"/>
    </location>
</feature>
<feature type="helix" evidence="11">
    <location>
        <begin position="50"/>
        <end position="71"/>
    </location>
</feature>
<feature type="strand" evidence="11">
    <location>
        <begin position="78"/>
        <end position="84"/>
    </location>
</feature>
<feature type="strand" evidence="11">
    <location>
        <begin position="86"/>
        <end position="96"/>
    </location>
</feature>
<feature type="helix" evidence="11">
    <location>
        <begin position="102"/>
        <end position="119"/>
    </location>
</feature>
<feature type="turn" evidence="11">
    <location>
        <begin position="120"/>
        <end position="123"/>
    </location>
</feature>
<feature type="strand" evidence="11">
    <location>
        <begin position="132"/>
        <end position="134"/>
    </location>
</feature>
<feature type="strand" evidence="11">
    <location>
        <begin position="136"/>
        <end position="142"/>
    </location>
</feature>
<feature type="helix" evidence="11">
    <location>
        <begin position="152"/>
        <end position="156"/>
    </location>
</feature>
<feature type="turn" evidence="11">
    <location>
        <begin position="157"/>
        <end position="159"/>
    </location>
</feature>
<feature type="turn" evidence="11">
    <location>
        <begin position="162"/>
        <end position="164"/>
    </location>
</feature>
<feature type="strand" evidence="11">
    <location>
        <begin position="165"/>
        <end position="170"/>
    </location>
</feature>
<feature type="helix" evidence="11">
    <location>
        <begin position="173"/>
        <end position="175"/>
    </location>
</feature>
<feature type="turn" evidence="11">
    <location>
        <begin position="176"/>
        <end position="180"/>
    </location>
</feature>
<feature type="helix" evidence="11">
    <location>
        <begin position="182"/>
        <end position="199"/>
    </location>
</feature>
<feature type="helix" evidence="11">
    <location>
        <begin position="202"/>
        <end position="205"/>
    </location>
</feature>
<comment type="function">
    <text evidence="4">Plays an essential role in the initiation of viral DNA synthesis. Binds specifically to an inverted terminal repeat element (ITR) on the 3' and 5' ends of the viral DNA, where it cleaves a site specifically to generate a priming site for initiation of the synthesis of a complementary strand. Also plays a role as transcriptional regulator, DNA helicase and as key factors in site-specific integration of the viral genome. Regulates host PKA activity by interacting with host PRKX as a mechanism of interfering with helper virus propagation and promoting its own replication. Inhibits the host cell cycle G1/S, S and G2/M transitions. These arrests may provide essential cellular factors for viral DNA replication.</text>
</comment>
<comment type="cofactor">
    <cofactor evidence="2">
        <name>a divalent metal cation</name>
        <dbReference type="ChEBI" id="CHEBI:60240"/>
    </cofactor>
</comment>
<comment type="subunit">
    <text evidence="5 7 8 9 10">Hexamer when associated with the viral DNA ori sequence. Interacts with host PRKX. Interacts with host TOPORS. Interacts with host TBP and SUB1/PC4; these interactions play important roles in transcriptional regulation.</text>
</comment>
<comment type="subcellular location">
    <subcellularLocation>
        <location evidence="6">Host nucleus</location>
    </subcellularLocation>
</comment>
<name>REP78_AAV2S</name>
<gene>
    <name type="primary">Rep78</name>
</gene>
<protein>
    <recommendedName>
        <fullName>Protein Rep78</fullName>
    </recommendedName>
</protein>
<evidence type="ECO:0000255" key="1">
    <source>
        <dbReference type="PROSITE-ProRule" id="PRU00551"/>
    </source>
</evidence>
<evidence type="ECO:0000255" key="2">
    <source>
        <dbReference type="PROSITE-ProRule" id="PRU01366"/>
    </source>
</evidence>
<evidence type="ECO:0000256" key="3">
    <source>
        <dbReference type="SAM" id="MobiDB-lite"/>
    </source>
</evidence>
<evidence type="ECO:0000269" key="4">
    <source>
    </source>
</evidence>
<evidence type="ECO:0000269" key="5">
    <source>
    </source>
</evidence>
<evidence type="ECO:0000269" key="6">
    <source>
    </source>
</evidence>
<evidence type="ECO:0000269" key="7">
    <source>
    </source>
</evidence>
<evidence type="ECO:0000269" key="8">
    <source>
    </source>
</evidence>
<evidence type="ECO:0000269" key="9">
    <source>
    </source>
</evidence>
<evidence type="ECO:0000269" key="10">
    <source>
    </source>
</evidence>
<evidence type="ECO:0007829" key="11">
    <source>
        <dbReference type="PDB" id="5BYG"/>
    </source>
</evidence>
<organismHost>
    <name type="scientific">Mammalia</name>
    <dbReference type="NCBI Taxonomy" id="40674"/>
</organismHost>
<dbReference type="EMBL" id="J01901">
    <property type="protein sequence ID" value="AAA42374.1"/>
    <property type="molecule type" value="Genomic_DNA"/>
</dbReference>
<dbReference type="EMBL" id="AF043303">
    <property type="protein sequence ID" value="AAC03775.1"/>
    <property type="molecule type" value="Genomic_DNA"/>
</dbReference>
<dbReference type="RefSeq" id="YP_680423.1">
    <property type="nucleotide sequence ID" value="NC_001401.2"/>
</dbReference>
<dbReference type="PDB" id="5BYG">
    <property type="method" value="X-ray"/>
    <property type="resolution" value="2.50 A"/>
    <property type="chains" value="A/B/C/D=1-210"/>
</dbReference>
<dbReference type="PDBsum" id="5BYG"/>
<dbReference type="SMR" id="Q89268"/>
<dbReference type="IntAct" id="Q89268">
    <property type="interactions" value="3"/>
</dbReference>
<dbReference type="DNASU" id="1489608"/>
<dbReference type="KEGG" id="vg:1489608"/>
<dbReference type="Proteomes" id="UP000008469">
    <property type="component" value="Genome"/>
</dbReference>
<dbReference type="Proteomes" id="UP000180764">
    <property type="component" value="Segment"/>
</dbReference>
<dbReference type="GO" id="GO:0042025">
    <property type="term" value="C:host cell nucleus"/>
    <property type="evidence" value="ECO:0007669"/>
    <property type="project" value="UniProtKB-SubCell"/>
</dbReference>
<dbReference type="GO" id="GO:0005524">
    <property type="term" value="F:ATP binding"/>
    <property type="evidence" value="ECO:0007669"/>
    <property type="project" value="UniProtKB-KW"/>
</dbReference>
<dbReference type="GO" id="GO:0003677">
    <property type="term" value="F:DNA binding"/>
    <property type="evidence" value="ECO:0007669"/>
    <property type="project" value="UniProtKB-KW"/>
</dbReference>
<dbReference type="GO" id="GO:0004519">
    <property type="term" value="F:endonuclease activity"/>
    <property type="evidence" value="ECO:0007669"/>
    <property type="project" value="UniProtKB-KW"/>
</dbReference>
<dbReference type="GO" id="GO:0046872">
    <property type="term" value="F:metal ion binding"/>
    <property type="evidence" value="ECO:0007669"/>
    <property type="project" value="UniProtKB-KW"/>
</dbReference>
<dbReference type="GO" id="GO:0006260">
    <property type="term" value="P:DNA replication"/>
    <property type="evidence" value="ECO:0007669"/>
    <property type="project" value="UniProtKB-KW"/>
</dbReference>
<dbReference type="GO" id="GO:0039592">
    <property type="term" value="P:symbiont-mediated arrest of host cell cycle during G2/M transition"/>
    <property type="evidence" value="ECO:0007669"/>
    <property type="project" value="UniProtKB-KW"/>
</dbReference>
<dbReference type="GO" id="GO:0039645">
    <property type="term" value="P:symbiont-mediated perturbation of host cell cycle G1/S transition checkpoint"/>
    <property type="evidence" value="ECO:0007669"/>
    <property type="project" value="UniProtKB-KW"/>
</dbReference>
<dbReference type="GO" id="GO:0039693">
    <property type="term" value="P:viral DNA genome replication"/>
    <property type="evidence" value="ECO:0000314"/>
    <property type="project" value="UniProtKB"/>
</dbReference>
<dbReference type="FunFam" id="3.40.1310.20:FF:000007">
    <property type="entry name" value="Protein Rep68"/>
    <property type="match status" value="1"/>
</dbReference>
<dbReference type="FunFam" id="3.40.50.300:FF:003161">
    <property type="entry name" value="Protein Rep68"/>
    <property type="match status" value="1"/>
</dbReference>
<dbReference type="Gene3D" id="1.10.10.950">
    <property type="match status" value="1"/>
</dbReference>
<dbReference type="Gene3D" id="3.40.1310.20">
    <property type="match status" value="1"/>
</dbReference>
<dbReference type="Gene3D" id="3.40.50.300">
    <property type="entry name" value="P-loop containing nucleotide triphosphate hydrolases"/>
    <property type="match status" value="1"/>
</dbReference>
<dbReference type="InterPro" id="IPR014015">
    <property type="entry name" value="Helicase_SF3_DNA-vir"/>
</dbReference>
<dbReference type="InterPro" id="IPR014835">
    <property type="entry name" value="NS1-Nuc"/>
</dbReference>
<dbReference type="InterPro" id="IPR027417">
    <property type="entry name" value="P-loop_NTPase"/>
</dbReference>
<dbReference type="InterPro" id="IPR001257">
    <property type="entry name" value="Parvovirus_NS1_helicase"/>
</dbReference>
<dbReference type="InterPro" id="IPR049901">
    <property type="entry name" value="PV_NS1-NUC"/>
</dbReference>
<dbReference type="Pfam" id="PF01057">
    <property type="entry name" value="Parvo_NS1"/>
    <property type="match status" value="1"/>
</dbReference>
<dbReference type="Pfam" id="PF08724">
    <property type="entry name" value="Rep_N"/>
    <property type="match status" value="1"/>
</dbReference>
<dbReference type="SUPFAM" id="SSF55464">
    <property type="entry name" value="Origin of replication-binding domain, RBD-like"/>
    <property type="match status" value="1"/>
</dbReference>
<dbReference type="SUPFAM" id="SSF52540">
    <property type="entry name" value="P-loop containing nucleoside triphosphate hydrolases"/>
    <property type="match status" value="1"/>
</dbReference>
<dbReference type="PROSITE" id="PS52022">
    <property type="entry name" value="PV_NS1_NUC"/>
    <property type="match status" value="1"/>
</dbReference>
<dbReference type="PROSITE" id="PS51206">
    <property type="entry name" value="SF3_HELICASE_1"/>
    <property type="match status" value="1"/>
</dbReference>
<sequence>MPGFYEIVIKVPSDLDGHLPGISDSFVNWVAEKEWELPPDSDMDLNLIEQAPLTVAEKLQRDFLTEWRRVSKAPEALFFVQFEKGESYFHMHVLVETTGVKSMVLGRFLSQIREKLIQRIYRGIEPTLPNWFAVTKTRNGAGGGNKVVDECYIPNYLLPKTQPELQWAWTNMEQYLSACLNLTERKRLVAQHLTHVSQTQEQNKENQNPNSDAPVIRSKTSARYMELVGWLVDKGITSEKQWIQEDQASYISFNAASNSRSQIKAALDNAGKIMSLTKTAPDYLVGQQPVEDISSNRIYKILELNGYDPQYAASVFLGWATKKFGKRNTIWLFGPATTGKTNIAEAIAHTVPFYGCVNWTNENFPFNDCVDKMVIWWEEGKMTAKVVESAKAILGGSKVRVDQKCKSSAQIDPTPVIVTSNTNMCAVIDGNSTTFEHQQPLQDRMFKFELTRRLDHDFGKVTKQEVKDFFRWAKDHVVEVEHEFYVKKGGAKKRPAPSDADISEPKRVRESVAQPSTSDAEASINYADRYQNKCSRHVGMNLMLFPCRQCERMNQNSNICFTHGQKDCLECFPVSESQPVSVVKKAYQKLCYIHHIMGKVPDACTACDLVNVDLDDCIFEQ</sequence>